<protein>
    <recommendedName>
        <fullName evidence="1">Putative pyruvate, phosphate dikinase regulatory protein</fullName>
        <shortName evidence="1">PPDK regulatory protein</shortName>
        <ecNumber evidence="1">2.7.11.32</ecNumber>
        <ecNumber evidence="1">2.7.4.27</ecNumber>
    </recommendedName>
</protein>
<organism>
    <name type="scientific">Rickettsia bellii (strain RML369-C)</name>
    <dbReference type="NCBI Taxonomy" id="336407"/>
    <lineage>
        <taxon>Bacteria</taxon>
        <taxon>Pseudomonadati</taxon>
        <taxon>Pseudomonadota</taxon>
        <taxon>Alphaproteobacteria</taxon>
        <taxon>Rickettsiales</taxon>
        <taxon>Rickettsiaceae</taxon>
        <taxon>Rickettsieae</taxon>
        <taxon>Rickettsia</taxon>
        <taxon>belli group</taxon>
    </lineage>
</organism>
<feature type="chain" id="PRO_0000277932" description="Putative pyruvate, phosphate dikinase regulatory protein">
    <location>
        <begin position="1"/>
        <end position="273"/>
    </location>
</feature>
<feature type="binding site" evidence="1">
    <location>
        <begin position="149"/>
        <end position="156"/>
    </location>
    <ligand>
        <name>ADP</name>
        <dbReference type="ChEBI" id="CHEBI:456216"/>
    </ligand>
</feature>
<comment type="function">
    <text evidence="1">Bifunctional serine/threonine kinase and phosphorylase involved in the regulation of the pyruvate, phosphate dikinase (PPDK) by catalyzing its phosphorylation/dephosphorylation.</text>
</comment>
<comment type="catalytic activity">
    <reaction evidence="1">
        <text>N(tele)-phospho-L-histidyl/L-threonyl-[pyruvate, phosphate dikinase] + ADP = N(tele)-phospho-L-histidyl/O-phospho-L-threonyl-[pyruvate, phosphate dikinase] + AMP + H(+)</text>
        <dbReference type="Rhea" id="RHEA:43692"/>
        <dbReference type="Rhea" id="RHEA-COMP:10650"/>
        <dbReference type="Rhea" id="RHEA-COMP:10651"/>
        <dbReference type="ChEBI" id="CHEBI:15378"/>
        <dbReference type="ChEBI" id="CHEBI:30013"/>
        <dbReference type="ChEBI" id="CHEBI:61977"/>
        <dbReference type="ChEBI" id="CHEBI:83586"/>
        <dbReference type="ChEBI" id="CHEBI:456215"/>
        <dbReference type="ChEBI" id="CHEBI:456216"/>
        <dbReference type="EC" id="2.7.11.32"/>
    </reaction>
</comment>
<comment type="catalytic activity">
    <reaction evidence="1">
        <text>N(tele)-phospho-L-histidyl/O-phospho-L-threonyl-[pyruvate, phosphate dikinase] + phosphate + H(+) = N(tele)-phospho-L-histidyl/L-threonyl-[pyruvate, phosphate dikinase] + diphosphate</text>
        <dbReference type="Rhea" id="RHEA:43696"/>
        <dbReference type="Rhea" id="RHEA-COMP:10650"/>
        <dbReference type="Rhea" id="RHEA-COMP:10651"/>
        <dbReference type="ChEBI" id="CHEBI:15378"/>
        <dbReference type="ChEBI" id="CHEBI:30013"/>
        <dbReference type="ChEBI" id="CHEBI:33019"/>
        <dbReference type="ChEBI" id="CHEBI:43474"/>
        <dbReference type="ChEBI" id="CHEBI:61977"/>
        <dbReference type="ChEBI" id="CHEBI:83586"/>
        <dbReference type="EC" id="2.7.4.27"/>
    </reaction>
</comment>
<comment type="similarity">
    <text evidence="1">Belongs to the pyruvate, phosphate/water dikinase regulatory protein family. PDRP subfamily.</text>
</comment>
<dbReference type="EC" id="2.7.11.32" evidence="1"/>
<dbReference type="EC" id="2.7.4.27" evidence="1"/>
<dbReference type="EMBL" id="CP000087">
    <property type="protein sequence ID" value="ABE04082.1"/>
    <property type="molecule type" value="Genomic_DNA"/>
</dbReference>
<dbReference type="RefSeq" id="WP_011476697.1">
    <property type="nucleotide sequence ID" value="NC_007940.1"/>
</dbReference>
<dbReference type="SMR" id="Q1RKN2"/>
<dbReference type="KEGG" id="rbe:RBE_0001"/>
<dbReference type="eggNOG" id="COG1806">
    <property type="taxonomic scope" value="Bacteria"/>
</dbReference>
<dbReference type="HOGENOM" id="CLU_046206_2_0_5"/>
<dbReference type="OrthoDB" id="9782201at2"/>
<dbReference type="Proteomes" id="UP000001951">
    <property type="component" value="Chromosome"/>
</dbReference>
<dbReference type="GO" id="GO:0043531">
    <property type="term" value="F:ADP binding"/>
    <property type="evidence" value="ECO:0007669"/>
    <property type="project" value="UniProtKB-UniRule"/>
</dbReference>
<dbReference type="GO" id="GO:0005524">
    <property type="term" value="F:ATP binding"/>
    <property type="evidence" value="ECO:0007669"/>
    <property type="project" value="InterPro"/>
</dbReference>
<dbReference type="GO" id="GO:0016776">
    <property type="term" value="F:phosphotransferase activity, phosphate group as acceptor"/>
    <property type="evidence" value="ECO:0007669"/>
    <property type="project" value="UniProtKB-UniRule"/>
</dbReference>
<dbReference type="GO" id="GO:0004674">
    <property type="term" value="F:protein serine/threonine kinase activity"/>
    <property type="evidence" value="ECO:0007669"/>
    <property type="project" value="UniProtKB-UniRule"/>
</dbReference>
<dbReference type="HAMAP" id="MF_00921">
    <property type="entry name" value="PDRP"/>
    <property type="match status" value="1"/>
</dbReference>
<dbReference type="InterPro" id="IPR005177">
    <property type="entry name" value="Kinase-pyrophosphorylase"/>
</dbReference>
<dbReference type="InterPro" id="IPR026565">
    <property type="entry name" value="PPDK_reg"/>
</dbReference>
<dbReference type="NCBIfam" id="NF003742">
    <property type="entry name" value="PRK05339.1"/>
    <property type="match status" value="1"/>
</dbReference>
<dbReference type="PANTHER" id="PTHR31756">
    <property type="entry name" value="PYRUVATE, PHOSPHATE DIKINASE REGULATORY PROTEIN 1, CHLOROPLASTIC"/>
    <property type="match status" value="1"/>
</dbReference>
<dbReference type="PANTHER" id="PTHR31756:SF3">
    <property type="entry name" value="PYRUVATE, PHOSPHATE DIKINASE REGULATORY PROTEIN 1, CHLOROPLASTIC"/>
    <property type="match status" value="1"/>
</dbReference>
<dbReference type="Pfam" id="PF03618">
    <property type="entry name" value="Kinase-PPPase"/>
    <property type="match status" value="1"/>
</dbReference>
<gene>
    <name type="ordered locus">RBE_0001</name>
</gene>
<evidence type="ECO:0000255" key="1">
    <source>
        <dbReference type="HAMAP-Rule" id="MF_00921"/>
    </source>
</evidence>
<sequence>MTKLIIHLVSDSSVQTAKSAAHSALAQFTSLKPKLYHWPMIRNSELLKEVLSKIESKHGIVLYTIADQELRKTLTKFCYELKIPCISVISKIIKEMSVFSGIEIEKEQNYNYKFDKTYFDTLNAIDYAIRHDDGQLLNELQFADIILIGPSRTSKTPTSVFLAYNGLKTANIPYVYNCPFPDFIEKDIDQLVVGLVINPNRLIEIRETRLNLLQINENRNYTDFNIVQKECLEVKKICELRNWPVIDVSTKSIEETAALIMRIYYNKKNKYKK</sequence>
<name>PDRP_RICBR</name>
<proteinExistence type="inferred from homology"/>
<reference key="1">
    <citation type="journal article" date="2006" name="PLoS Genet.">
        <title>Genome sequence of Rickettsia bellii illuminates the role of amoebae in gene exchanges between intracellular pathogens.</title>
        <authorList>
            <person name="Ogata H."/>
            <person name="La Scola B."/>
            <person name="Audic S."/>
            <person name="Renesto P."/>
            <person name="Blanc G."/>
            <person name="Robert C."/>
            <person name="Fournier P.-E."/>
            <person name="Claverie J.-M."/>
            <person name="Raoult D."/>
        </authorList>
    </citation>
    <scope>NUCLEOTIDE SEQUENCE [LARGE SCALE GENOMIC DNA]</scope>
    <source>
        <strain>RML369-C</strain>
    </source>
</reference>
<accession>Q1RKN2</accession>
<keyword id="KW-0418">Kinase</keyword>
<keyword id="KW-0547">Nucleotide-binding</keyword>
<keyword id="KW-0723">Serine/threonine-protein kinase</keyword>
<keyword id="KW-0808">Transferase</keyword>